<feature type="chain" id="PRO_1000214590" description="Large ribosomal subunit protein uL4">
    <location>
        <begin position="1"/>
        <end position="204"/>
    </location>
</feature>
<feature type="region of interest" description="Disordered" evidence="2">
    <location>
        <begin position="47"/>
        <end position="69"/>
    </location>
</feature>
<evidence type="ECO:0000255" key="1">
    <source>
        <dbReference type="HAMAP-Rule" id="MF_01328"/>
    </source>
</evidence>
<evidence type="ECO:0000256" key="2">
    <source>
        <dbReference type="SAM" id="MobiDB-lite"/>
    </source>
</evidence>
<evidence type="ECO:0000305" key="3"/>
<dbReference type="EMBL" id="CP001614">
    <property type="protein sequence ID" value="ACR12616.1"/>
    <property type="molecule type" value="Genomic_DNA"/>
</dbReference>
<dbReference type="RefSeq" id="WP_015818728.1">
    <property type="nucleotide sequence ID" value="NC_012997.1"/>
</dbReference>
<dbReference type="SMR" id="C5BQ62"/>
<dbReference type="STRING" id="377629.TERTU_0909"/>
<dbReference type="KEGG" id="ttu:TERTU_0909"/>
<dbReference type="eggNOG" id="COG0088">
    <property type="taxonomic scope" value="Bacteria"/>
</dbReference>
<dbReference type="HOGENOM" id="CLU_041575_5_2_6"/>
<dbReference type="OrthoDB" id="9803201at2"/>
<dbReference type="Proteomes" id="UP000009080">
    <property type="component" value="Chromosome"/>
</dbReference>
<dbReference type="GO" id="GO:1990904">
    <property type="term" value="C:ribonucleoprotein complex"/>
    <property type="evidence" value="ECO:0007669"/>
    <property type="project" value="UniProtKB-KW"/>
</dbReference>
<dbReference type="GO" id="GO:0005840">
    <property type="term" value="C:ribosome"/>
    <property type="evidence" value="ECO:0007669"/>
    <property type="project" value="UniProtKB-KW"/>
</dbReference>
<dbReference type="GO" id="GO:0019843">
    <property type="term" value="F:rRNA binding"/>
    <property type="evidence" value="ECO:0007669"/>
    <property type="project" value="UniProtKB-UniRule"/>
</dbReference>
<dbReference type="GO" id="GO:0003735">
    <property type="term" value="F:structural constituent of ribosome"/>
    <property type="evidence" value="ECO:0007669"/>
    <property type="project" value="InterPro"/>
</dbReference>
<dbReference type="GO" id="GO:0006412">
    <property type="term" value="P:translation"/>
    <property type="evidence" value="ECO:0007669"/>
    <property type="project" value="UniProtKB-UniRule"/>
</dbReference>
<dbReference type="FunFam" id="3.40.1370.10:FF:000001">
    <property type="entry name" value="50S ribosomal protein L4"/>
    <property type="match status" value="1"/>
</dbReference>
<dbReference type="Gene3D" id="3.40.1370.10">
    <property type="match status" value="1"/>
</dbReference>
<dbReference type="HAMAP" id="MF_01328_B">
    <property type="entry name" value="Ribosomal_uL4_B"/>
    <property type="match status" value="1"/>
</dbReference>
<dbReference type="InterPro" id="IPR002136">
    <property type="entry name" value="Ribosomal_uL4"/>
</dbReference>
<dbReference type="InterPro" id="IPR013005">
    <property type="entry name" value="Ribosomal_uL4-like"/>
</dbReference>
<dbReference type="InterPro" id="IPR023574">
    <property type="entry name" value="Ribosomal_uL4_dom_sf"/>
</dbReference>
<dbReference type="NCBIfam" id="TIGR03953">
    <property type="entry name" value="rplD_bact"/>
    <property type="match status" value="1"/>
</dbReference>
<dbReference type="PANTHER" id="PTHR10746">
    <property type="entry name" value="50S RIBOSOMAL PROTEIN L4"/>
    <property type="match status" value="1"/>
</dbReference>
<dbReference type="PANTHER" id="PTHR10746:SF6">
    <property type="entry name" value="LARGE RIBOSOMAL SUBUNIT PROTEIN UL4M"/>
    <property type="match status" value="1"/>
</dbReference>
<dbReference type="Pfam" id="PF00573">
    <property type="entry name" value="Ribosomal_L4"/>
    <property type="match status" value="1"/>
</dbReference>
<dbReference type="SUPFAM" id="SSF52166">
    <property type="entry name" value="Ribosomal protein L4"/>
    <property type="match status" value="1"/>
</dbReference>
<proteinExistence type="inferred from homology"/>
<protein>
    <recommendedName>
        <fullName evidence="1">Large ribosomal subunit protein uL4</fullName>
    </recommendedName>
    <alternativeName>
        <fullName evidence="3">50S ribosomal protein L4</fullName>
    </alternativeName>
</protein>
<gene>
    <name evidence="1" type="primary">rplD</name>
    <name type="ordered locus">TERTU_0909</name>
</gene>
<reference key="1">
    <citation type="journal article" date="2009" name="PLoS ONE">
        <title>The complete genome of Teredinibacter turnerae T7901: an intracellular endosymbiont of marine wood-boring bivalves (shipworms).</title>
        <authorList>
            <person name="Yang J.C."/>
            <person name="Madupu R."/>
            <person name="Durkin A.S."/>
            <person name="Ekborg N.A."/>
            <person name="Pedamallu C.S."/>
            <person name="Hostetler J.B."/>
            <person name="Radune D."/>
            <person name="Toms B.S."/>
            <person name="Henrissat B."/>
            <person name="Coutinho P.M."/>
            <person name="Schwarz S."/>
            <person name="Field L."/>
            <person name="Trindade-Silva A.E."/>
            <person name="Soares C.A.G."/>
            <person name="Elshahawi S."/>
            <person name="Hanora A."/>
            <person name="Schmidt E.W."/>
            <person name="Haygood M.G."/>
            <person name="Posfai J."/>
            <person name="Benner J."/>
            <person name="Madinger C."/>
            <person name="Nove J."/>
            <person name="Anton B."/>
            <person name="Chaudhary K."/>
            <person name="Foster J."/>
            <person name="Holman A."/>
            <person name="Kumar S."/>
            <person name="Lessard P.A."/>
            <person name="Luyten Y.A."/>
            <person name="Slatko B."/>
            <person name="Wood N."/>
            <person name="Wu B."/>
            <person name="Teplitski M."/>
            <person name="Mougous J.D."/>
            <person name="Ward N."/>
            <person name="Eisen J.A."/>
            <person name="Badger J.H."/>
            <person name="Distel D.L."/>
        </authorList>
    </citation>
    <scope>NUCLEOTIDE SEQUENCE [LARGE SCALE GENOMIC DNA]</scope>
    <source>
        <strain>ATCC 39867 / T7901</strain>
    </source>
</reference>
<comment type="function">
    <text evidence="1">One of the primary rRNA binding proteins, this protein initially binds near the 5'-end of the 23S rRNA. It is important during the early stages of 50S assembly. It makes multiple contacts with different domains of the 23S rRNA in the assembled 50S subunit and ribosome.</text>
</comment>
<comment type="function">
    <text evidence="1">Forms part of the polypeptide exit tunnel.</text>
</comment>
<comment type="subunit">
    <text evidence="1">Part of the 50S ribosomal subunit.</text>
</comment>
<comment type="similarity">
    <text evidence="1">Belongs to the universal ribosomal protein uL4 family.</text>
</comment>
<name>RL4_TERTT</name>
<sequence>MELSIVTPQGAKGTVAVSEVAFGKEFNQDLVHQAVVAYMAGSRQGTKAQKNRAAVSGGGKKPWRQKGTGRARAGTIRSPIWRSGGVTFAAQPRDFEQKLNKKMYRAALRCILSELARQERLVVVEEFDLDAPKTKILVQKLAEYDLTDALIVSEQVSENLYLAARNLHKVDVRDVQAIDPVSLIRFEKVVMTVSAVKKLEEVLA</sequence>
<organism>
    <name type="scientific">Teredinibacter turnerae (strain ATCC 39867 / T7901)</name>
    <dbReference type="NCBI Taxonomy" id="377629"/>
    <lineage>
        <taxon>Bacteria</taxon>
        <taxon>Pseudomonadati</taxon>
        <taxon>Pseudomonadota</taxon>
        <taxon>Gammaproteobacteria</taxon>
        <taxon>Cellvibrionales</taxon>
        <taxon>Cellvibrionaceae</taxon>
        <taxon>Teredinibacter</taxon>
    </lineage>
</organism>
<accession>C5BQ62</accession>
<keyword id="KW-1185">Reference proteome</keyword>
<keyword id="KW-0687">Ribonucleoprotein</keyword>
<keyword id="KW-0689">Ribosomal protein</keyword>
<keyword id="KW-0694">RNA-binding</keyword>
<keyword id="KW-0699">rRNA-binding</keyword>